<gene>
    <name evidence="1" type="primary">gpsA</name>
    <name type="ordered locus">BPP0291</name>
</gene>
<proteinExistence type="inferred from homology"/>
<reference key="1">
    <citation type="journal article" date="2003" name="Nat. Genet.">
        <title>Comparative analysis of the genome sequences of Bordetella pertussis, Bordetella parapertussis and Bordetella bronchiseptica.</title>
        <authorList>
            <person name="Parkhill J."/>
            <person name="Sebaihia M."/>
            <person name="Preston A."/>
            <person name="Murphy L.D."/>
            <person name="Thomson N.R."/>
            <person name="Harris D.E."/>
            <person name="Holden M.T.G."/>
            <person name="Churcher C.M."/>
            <person name="Bentley S.D."/>
            <person name="Mungall K.L."/>
            <person name="Cerdeno-Tarraga A.-M."/>
            <person name="Temple L."/>
            <person name="James K.D."/>
            <person name="Harris B."/>
            <person name="Quail M.A."/>
            <person name="Achtman M."/>
            <person name="Atkin R."/>
            <person name="Baker S."/>
            <person name="Basham D."/>
            <person name="Bason N."/>
            <person name="Cherevach I."/>
            <person name="Chillingworth T."/>
            <person name="Collins M."/>
            <person name="Cronin A."/>
            <person name="Davis P."/>
            <person name="Doggett J."/>
            <person name="Feltwell T."/>
            <person name="Goble A."/>
            <person name="Hamlin N."/>
            <person name="Hauser H."/>
            <person name="Holroyd S."/>
            <person name="Jagels K."/>
            <person name="Leather S."/>
            <person name="Moule S."/>
            <person name="Norberczak H."/>
            <person name="O'Neil S."/>
            <person name="Ormond D."/>
            <person name="Price C."/>
            <person name="Rabbinowitsch E."/>
            <person name="Rutter S."/>
            <person name="Sanders M."/>
            <person name="Saunders D."/>
            <person name="Seeger K."/>
            <person name="Sharp S."/>
            <person name="Simmonds M."/>
            <person name="Skelton J."/>
            <person name="Squares R."/>
            <person name="Squares S."/>
            <person name="Stevens K."/>
            <person name="Unwin L."/>
            <person name="Whitehead S."/>
            <person name="Barrell B.G."/>
            <person name="Maskell D.J."/>
        </authorList>
    </citation>
    <scope>NUCLEOTIDE SEQUENCE [LARGE SCALE GENOMIC DNA]</scope>
    <source>
        <strain>12822 / ATCC BAA-587 / NCTC 13253</strain>
    </source>
</reference>
<protein>
    <recommendedName>
        <fullName evidence="1">Glycerol-3-phosphate dehydrogenase [NAD(P)+]</fullName>
        <ecNumber evidence="1">1.1.1.94</ecNumber>
    </recommendedName>
    <alternativeName>
        <fullName evidence="1">NAD(P)(+)-dependent glycerol-3-phosphate dehydrogenase</fullName>
    </alternativeName>
    <alternativeName>
        <fullName evidence="1">NAD(P)H-dependent dihydroxyacetone-phosphate reductase</fullName>
    </alternativeName>
</protein>
<dbReference type="EC" id="1.1.1.94" evidence="1"/>
<dbReference type="EMBL" id="BX640423">
    <property type="protein sequence ID" value="CAE40032.1"/>
    <property type="molecule type" value="Genomic_DNA"/>
</dbReference>
<dbReference type="RefSeq" id="WP_010927387.1">
    <property type="nucleotide sequence ID" value="NC_002928.3"/>
</dbReference>
<dbReference type="SMR" id="Q7W1R0"/>
<dbReference type="GeneID" id="93206522"/>
<dbReference type="KEGG" id="bpa:BPP0291"/>
<dbReference type="HOGENOM" id="CLU_033449_0_2_4"/>
<dbReference type="UniPathway" id="UPA00940"/>
<dbReference type="Proteomes" id="UP000001421">
    <property type="component" value="Chromosome"/>
</dbReference>
<dbReference type="GO" id="GO:0005829">
    <property type="term" value="C:cytosol"/>
    <property type="evidence" value="ECO:0007669"/>
    <property type="project" value="TreeGrafter"/>
</dbReference>
<dbReference type="GO" id="GO:0047952">
    <property type="term" value="F:glycerol-3-phosphate dehydrogenase [NAD(P)+] activity"/>
    <property type="evidence" value="ECO:0007669"/>
    <property type="project" value="UniProtKB-UniRule"/>
</dbReference>
<dbReference type="GO" id="GO:0051287">
    <property type="term" value="F:NAD binding"/>
    <property type="evidence" value="ECO:0007669"/>
    <property type="project" value="InterPro"/>
</dbReference>
<dbReference type="GO" id="GO:0005975">
    <property type="term" value="P:carbohydrate metabolic process"/>
    <property type="evidence" value="ECO:0007669"/>
    <property type="project" value="InterPro"/>
</dbReference>
<dbReference type="GO" id="GO:0046167">
    <property type="term" value="P:glycerol-3-phosphate biosynthetic process"/>
    <property type="evidence" value="ECO:0007669"/>
    <property type="project" value="UniProtKB-UniRule"/>
</dbReference>
<dbReference type="GO" id="GO:0046168">
    <property type="term" value="P:glycerol-3-phosphate catabolic process"/>
    <property type="evidence" value="ECO:0007669"/>
    <property type="project" value="InterPro"/>
</dbReference>
<dbReference type="GO" id="GO:0006650">
    <property type="term" value="P:glycerophospholipid metabolic process"/>
    <property type="evidence" value="ECO:0007669"/>
    <property type="project" value="UniProtKB-UniRule"/>
</dbReference>
<dbReference type="GO" id="GO:0008654">
    <property type="term" value="P:phospholipid biosynthetic process"/>
    <property type="evidence" value="ECO:0007669"/>
    <property type="project" value="UniProtKB-KW"/>
</dbReference>
<dbReference type="FunFam" id="1.10.1040.10:FF:000001">
    <property type="entry name" value="Glycerol-3-phosphate dehydrogenase [NAD(P)+]"/>
    <property type="match status" value="1"/>
</dbReference>
<dbReference type="FunFam" id="3.40.50.720:FF:000019">
    <property type="entry name" value="Glycerol-3-phosphate dehydrogenase [NAD(P)+]"/>
    <property type="match status" value="1"/>
</dbReference>
<dbReference type="Gene3D" id="1.10.1040.10">
    <property type="entry name" value="N-(1-d-carboxylethyl)-l-norvaline Dehydrogenase, domain 2"/>
    <property type="match status" value="1"/>
</dbReference>
<dbReference type="Gene3D" id="3.40.50.720">
    <property type="entry name" value="NAD(P)-binding Rossmann-like Domain"/>
    <property type="match status" value="1"/>
</dbReference>
<dbReference type="HAMAP" id="MF_00394">
    <property type="entry name" value="NAD_Glyc3P_dehydrog"/>
    <property type="match status" value="1"/>
</dbReference>
<dbReference type="InterPro" id="IPR008927">
    <property type="entry name" value="6-PGluconate_DH-like_C_sf"/>
</dbReference>
<dbReference type="InterPro" id="IPR013328">
    <property type="entry name" value="6PGD_dom2"/>
</dbReference>
<dbReference type="InterPro" id="IPR006168">
    <property type="entry name" value="G3P_DH_NAD-dep"/>
</dbReference>
<dbReference type="InterPro" id="IPR006109">
    <property type="entry name" value="G3P_DH_NAD-dep_C"/>
</dbReference>
<dbReference type="InterPro" id="IPR011128">
    <property type="entry name" value="G3P_DH_NAD-dep_N"/>
</dbReference>
<dbReference type="InterPro" id="IPR036291">
    <property type="entry name" value="NAD(P)-bd_dom_sf"/>
</dbReference>
<dbReference type="NCBIfam" id="NF000940">
    <property type="entry name" value="PRK00094.1-2"/>
    <property type="match status" value="1"/>
</dbReference>
<dbReference type="NCBIfam" id="NF000942">
    <property type="entry name" value="PRK00094.1-4"/>
    <property type="match status" value="1"/>
</dbReference>
<dbReference type="PANTHER" id="PTHR11728">
    <property type="entry name" value="GLYCEROL-3-PHOSPHATE DEHYDROGENASE"/>
    <property type="match status" value="1"/>
</dbReference>
<dbReference type="PANTHER" id="PTHR11728:SF1">
    <property type="entry name" value="GLYCEROL-3-PHOSPHATE DEHYDROGENASE [NAD(+)] 2, CHLOROPLASTIC"/>
    <property type="match status" value="1"/>
</dbReference>
<dbReference type="Pfam" id="PF07479">
    <property type="entry name" value="NAD_Gly3P_dh_C"/>
    <property type="match status" value="1"/>
</dbReference>
<dbReference type="Pfam" id="PF01210">
    <property type="entry name" value="NAD_Gly3P_dh_N"/>
    <property type="match status" value="1"/>
</dbReference>
<dbReference type="PIRSF" id="PIRSF000114">
    <property type="entry name" value="Glycerol-3-P_dh"/>
    <property type="match status" value="1"/>
</dbReference>
<dbReference type="PRINTS" id="PR00077">
    <property type="entry name" value="GPDHDRGNASE"/>
</dbReference>
<dbReference type="SUPFAM" id="SSF48179">
    <property type="entry name" value="6-phosphogluconate dehydrogenase C-terminal domain-like"/>
    <property type="match status" value="1"/>
</dbReference>
<dbReference type="SUPFAM" id="SSF51735">
    <property type="entry name" value="NAD(P)-binding Rossmann-fold domains"/>
    <property type="match status" value="1"/>
</dbReference>
<dbReference type="PROSITE" id="PS00957">
    <property type="entry name" value="NAD_G3PDH"/>
    <property type="match status" value="1"/>
</dbReference>
<comment type="function">
    <text evidence="1">Catalyzes the reduction of the glycolytic intermediate dihydroxyacetone phosphate (DHAP) to sn-glycerol 3-phosphate (G3P), the key precursor for phospholipid synthesis.</text>
</comment>
<comment type="catalytic activity">
    <reaction evidence="1">
        <text>sn-glycerol 3-phosphate + NAD(+) = dihydroxyacetone phosphate + NADH + H(+)</text>
        <dbReference type="Rhea" id="RHEA:11092"/>
        <dbReference type="ChEBI" id="CHEBI:15378"/>
        <dbReference type="ChEBI" id="CHEBI:57540"/>
        <dbReference type="ChEBI" id="CHEBI:57597"/>
        <dbReference type="ChEBI" id="CHEBI:57642"/>
        <dbReference type="ChEBI" id="CHEBI:57945"/>
        <dbReference type="EC" id="1.1.1.94"/>
    </reaction>
    <physiologicalReaction direction="right-to-left" evidence="1">
        <dbReference type="Rhea" id="RHEA:11094"/>
    </physiologicalReaction>
</comment>
<comment type="catalytic activity">
    <reaction evidence="1">
        <text>sn-glycerol 3-phosphate + NADP(+) = dihydroxyacetone phosphate + NADPH + H(+)</text>
        <dbReference type="Rhea" id="RHEA:11096"/>
        <dbReference type="ChEBI" id="CHEBI:15378"/>
        <dbReference type="ChEBI" id="CHEBI:57597"/>
        <dbReference type="ChEBI" id="CHEBI:57642"/>
        <dbReference type="ChEBI" id="CHEBI:57783"/>
        <dbReference type="ChEBI" id="CHEBI:58349"/>
        <dbReference type="EC" id="1.1.1.94"/>
    </reaction>
    <physiologicalReaction direction="right-to-left" evidence="1">
        <dbReference type="Rhea" id="RHEA:11098"/>
    </physiologicalReaction>
</comment>
<comment type="pathway">
    <text evidence="1">Membrane lipid metabolism; glycerophospholipid metabolism.</text>
</comment>
<comment type="subcellular location">
    <subcellularLocation>
        <location evidence="1">Cytoplasm</location>
    </subcellularLocation>
</comment>
<comment type="similarity">
    <text evidence="1">Belongs to the NAD-dependent glycerol-3-phosphate dehydrogenase family.</text>
</comment>
<keyword id="KW-0963">Cytoplasm</keyword>
<keyword id="KW-0444">Lipid biosynthesis</keyword>
<keyword id="KW-0443">Lipid metabolism</keyword>
<keyword id="KW-0520">NAD</keyword>
<keyword id="KW-0521">NADP</keyword>
<keyword id="KW-0547">Nucleotide-binding</keyword>
<keyword id="KW-0560">Oxidoreductase</keyword>
<keyword id="KW-0594">Phospholipid biosynthesis</keyword>
<keyword id="KW-1208">Phospholipid metabolism</keyword>
<evidence type="ECO:0000255" key="1">
    <source>
        <dbReference type="HAMAP-Rule" id="MF_00394"/>
    </source>
</evidence>
<accession>Q7W1R0</accession>
<feature type="chain" id="PRO_0000137931" description="Glycerol-3-phosphate dehydrogenase [NAD(P)+]">
    <location>
        <begin position="1"/>
        <end position="351"/>
    </location>
</feature>
<feature type="active site" description="Proton acceptor" evidence="1">
    <location>
        <position position="208"/>
    </location>
</feature>
<feature type="binding site" evidence="1">
    <location>
        <position position="18"/>
    </location>
    <ligand>
        <name>NADPH</name>
        <dbReference type="ChEBI" id="CHEBI:57783"/>
    </ligand>
</feature>
<feature type="binding site" evidence="1">
    <location>
        <position position="19"/>
    </location>
    <ligand>
        <name>NADPH</name>
        <dbReference type="ChEBI" id="CHEBI:57783"/>
    </ligand>
</feature>
<feature type="binding site" evidence="1">
    <location>
        <position position="38"/>
    </location>
    <ligand>
        <name>NADPH</name>
        <dbReference type="ChEBI" id="CHEBI:57783"/>
    </ligand>
</feature>
<feature type="binding site" evidence="1">
    <location>
        <position position="122"/>
    </location>
    <ligand>
        <name>NADPH</name>
        <dbReference type="ChEBI" id="CHEBI:57783"/>
    </ligand>
</feature>
<feature type="binding site" evidence="1">
    <location>
        <position position="122"/>
    </location>
    <ligand>
        <name>sn-glycerol 3-phosphate</name>
        <dbReference type="ChEBI" id="CHEBI:57597"/>
    </ligand>
</feature>
<feature type="binding site" evidence="1">
    <location>
        <position position="153"/>
    </location>
    <ligand>
        <name>sn-glycerol 3-phosphate</name>
        <dbReference type="ChEBI" id="CHEBI:57597"/>
    </ligand>
</feature>
<feature type="binding site" evidence="1">
    <location>
        <position position="155"/>
    </location>
    <ligand>
        <name>sn-glycerol 3-phosphate</name>
        <dbReference type="ChEBI" id="CHEBI:57597"/>
    </ligand>
</feature>
<feature type="binding site" evidence="1">
    <location>
        <position position="157"/>
    </location>
    <ligand>
        <name>NADPH</name>
        <dbReference type="ChEBI" id="CHEBI:57783"/>
    </ligand>
</feature>
<feature type="binding site" evidence="1">
    <location>
        <position position="208"/>
    </location>
    <ligand>
        <name>sn-glycerol 3-phosphate</name>
        <dbReference type="ChEBI" id="CHEBI:57597"/>
    </ligand>
</feature>
<feature type="binding site" evidence="1">
    <location>
        <position position="261"/>
    </location>
    <ligand>
        <name>sn-glycerol 3-phosphate</name>
        <dbReference type="ChEBI" id="CHEBI:57597"/>
    </ligand>
</feature>
<feature type="binding site" evidence="1">
    <location>
        <position position="271"/>
    </location>
    <ligand>
        <name>sn-glycerol 3-phosphate</name>
        <dbReference type="ChEBI" id="CHEBI:57597"/>
    </ligand>
</feature>
<feature type="binding site" evidence="1">
    <location>
        <position position="272"/>
    </location>
    <ligand>
        <name>NADPH</name>
        <dbReference type="ChEBI" id="CHEBI:57783"/>
    </ligand>
</feature>
<feature type="binding site" evidence="1">
    <location>
        <position position="272"/>
    </location>
    <ligand>
        <name>sn-glycerol 3-phosphate</name>
        <dbReference type="ChEBI" id="CHEBI:57597"/>
    </ligand>
</feature>
<feature type="binding site" evidence="1">
    <location>
        <position position="273"/>
    </location>
    <ligand>
        <name>sn-glycerol 3-phosphate</name>
        <dbReference type="ChEBI" id="CHEBI:57597"/>
    </ligand>
</feature>
<feature type="binding site" evidence="1">
    <location>
        <position position="297"/>
    </location>
    <ligand>
        <name>NADPH</name>
        <dbReference type="ChEBI" id="CHEBI:57783"/>
    </ligand>
</feature>
<name>GPDA_BORPA</name>
<organism>
    <name type="scientific">Bordetella parapertussis (strain 12822 / ATCC BAA-587 / NCTC 13253)</name>
    <dbReference type="NCBI Taxonomy" id="257311"/>
    <lineage>
        <taxon>Bacteria</taxon>
        <taxon>Pseudomonadati</taxon>
        <taxon>Pseudomonadota</taxon>
        <taxon>Betaproteobacteria</taxon>
        <taxon>Burkholderiales</taxon>
        <taxon>Alcaligenaceae</taxon>
        <taxon>Bordetella</taxon>
    </lineage>
</organism>
<sequence>MSQARPATLRVAVLGAGSWGTALAAAASRRHPTVLWARDGAQAQAMAARHENTRYLPGVALPPALQVSADLAQALAHLAHDPAHALIILGVPVAGMTPLCTELAARLPALGLQAVPLVWTCKGFEEQTAHLPHETVQAALGAMPGLAAGVLSGPSFAREVAQGLPVALTVASESSAVRDAVTTALHGAAVRIYASTDVVGVEVGGALKNVIAVACGICDGLALGTNARAALITRGLAEMARFGAALGAQQETFAGLTGLGDLVLTATGELSRNRRVGLEIGAGRKLADILASGMTAEGVRCARAARDRARALNIELPITEAVCAVLFEGLSPMTAVSALLAREARPESPTP</sequence>